<accession>Q8CWS0</accession>
<reference key="1">
    <citation type="journal article" date="2001" name="J. Bacteriol.">
        <title>Genome of the bacterium Streptococcus pneumoniae strain R6.</title>
        <authorList>
            <person name="Hoskins J."/>
            <person name="Alborn W.E. Jr."/>
            <person name="Arnold J."/>
            <person name="Blaszczak L.C."/>
            <person name="Burgett S."/>
            <person name="DeHoff B.S."/>
            <person name="Estrem S.T."/>
            <person name="Fritz L."/>
            <person name="Fu D.-J."/>
            <person name="Fuller W."/>
            <person name="Geringer C."/>
            <person name="Gilmour R."/>
            <person name="Glass J.S."/>
            <person name="Khoja H."/>
            <person name="Kraft A.R."/>
            <person name="Lagace R.E."/>
            <person name="LeBlanc D.J."/>
            <person name="Lee L.N."/>
            <person name="Lefkowitz E.J."/>
            <person name="Lu J."/>
            <person name="Matsushima P."/>
            <person name="McAhren S.M."/>
            <person name="McHenney M."/>
            <person name="McLeaster K."/>
            <person name="Mundy C.W."/>
            <person name="Nicas T.I."/>
            <person name="Norris F.H."/>
            <person name="O'Gara M."/>
            <person name="Peery R.B."/>
            <person name="Robertson G.T."/>
            <person name="Rockey P."/>
            <person name="Sun P.-M."/>
            <person name="Winkler M.E."/>
            <person name="Yang Y."/>
            <person name="Young-Bellido M."/>
            <person name="Zhao G."/>
            <person name="Zook C.A."/>
            <person name="Baltz R.H."/>
            <person name="Jaskunas S.R."/>
            <person name="Rosteck P.R. Jr."/>
            <person name="Skatrud P.L."/>
            <person name="Glass J.I."/>
        </authorList>
    </citation>
    <scope>NUCLEOTIDE SEQUENCE [LARGE SCALE GENOMIC DNA]</scope>
    <source>
        <strain>ATCC BAA-255 / R6</strain>
    </source>
</reference>
<feature type="chain" id="PRO_0000168036" description="Small ribosomal subunit protein bS20">
    <location>
        <begin position="1"/>
        <end position="78"/>
    </location>
</feature>
<sequence>MANIKSAIKRAELNVKQNEKNSAQKSAMRTAIKAFEANPSEELFRAASSAIDKAETKGLIHKNKASRDKARLSAKLAK</sequence>
<organism>
    <name type="scientific">Streptococcus pneumoniae (strain ATCC BAA-255 / R6)</name>
    <dbReference type="NCBI Taxonomy" id="171101"/>
    <lineage>
        <taxon>Bacteria</taxon>
        <taxon>Bacillati</taxon>
        <taxon>Bacillota</taxon>
        <taxon>Bacilli</taxon>
        <taxon>Lactobacillales</taxon>
        <taxon>Streptococcaceae</taxon>
        <taxon>Streptococcus</taxon>
    </lineage>
</organism>
<proteinExistence type="inferred from homology"/>
<comment type="function">
    <text evidence="1">Binds directly to 16S ribosomal RNA.</text>
</comment>
<comment type="similarity">
    <text evidence="1">Belongs to the bacterial ribosomal protein bS20 family.</text>
</comment>
<comment type="sequence caution" evidence="2">
    <conflict type="erroneous initiation">
        <sequence resource="EMBL-CDS" id="AAK99544"/>
    </conflict>
</comment>
<name>RS20_STRR6</name>
<evidence type="ECO:0000255" key="1">
    <source>
        <dbReference type="HAMAP-Rule" id="MF_00500"/>
    </source>
</evidence>
<evidence type="ECO:0000305" key="2"/>
<keyword id="KW-1185">Reference proteome</keyword>
<keyword id="KW-0687">Ribonucleoprotein</keyword>
<keyword id="KW-0689">Ribosomal protein</keyword>
<keyword id="KW-0694">RNA-binding</keyword>
<keyword id="KW-0699">rRNA-binding</keyword>
<gene>
    <name evidence="1" type="primary">rpsT</name>
    <name type="ordered locus">spr0740</name>
</gene>
<dbReference type="EMBL" id="AE007317">
    <property type="protein sequence ID" value="AAK99544.1"/>
    <property type="status" value="ALT_INIT"/>
    <property type="molecule type" value="Genomic_DNA"/>
</dbReference>
<dbReference type="PIR" id="D97964">
    <property type="entry name" value="D97964"/>
</dbReference>
<dbReference type="RefSeq" id="NP_358334.2">
    <property type="nucleotide sequence ID" value="NC_003098.1"/>
</dbReference>
<dbReference type="RefSeq" id="WP_001274000.1">
    <property type="nucleotide sequence ID" value="NC_003098.1"/>
</dbReference>
<dbReference type="SMR" id="Q8CWS0"/>
<dbReference type="STRING" id="171101.spr0740"/>
<dbReference type="GeneID" id="93739844"/>
<dbReference type="KEGG" id="spr:spr0740"/>
<dbReference type="PATRIC" id="fig|171101.6.peg.820"/>
<dbReference type="eggNOG" id="COG0268">
    <property type="taxonomic scope" value="Bacteria"/>
</dbReference>
<dbReference type="HOGENOM" id="CLU_160655_1_1_9"/>
<dbReference type="PRO" id="PR:Q8CWS0"/>
<dbReference type="Proteomes" id="UP000000586">
    <property type="component" value="Chromosome"/>
</dbReference>
<dbReference type="GO" id="GO:0005829">
    <property type="term" value="C:cytosol"/>
    <property type="evidence" value="ECO:0000318"/>
    <property type="project" value="GO_Central"/>
</dbReference>
<dbReference type="GO" id="GO:0015935">
    <property type="term" value="C:small ribosomal subunit"/>
    <property type="evidence" value="ECO:0000318"/>
    <property type="project" value="GO_Central"/>
</dbReference>
<dbReference type="GO" id="GO:0070181">
    <property type="term" value="F:small ribosomal subunit rRNA binding"/>
    <property type="evidence" value="ECO:0000318"/>
    <property type="project" value="GO_Central"/>
</dbReference>
<dbReference type="GO" id="GO:0003735">
    <property type="term" value="F:structural constituent of ribosome"/>
    <property type="evidence" value="ECO:0007669"/>
    <property type="project" value="InterPro"/>
</dbReference>
<dbReference type="GO" id="GO:0006412">
    <property type="term" value="P:translation"/>
    <property type="evidence" value="ECO:0007669"/>
    <property type="project" value="UniProtKB-UniRule"/>
</dbReference>
<dbReference type="FunFam" id="1.20.58.110:FF:000001">
    <property type="entry name" value="30S ribosomal protein S20"/>
    <property type="match status" value="1"/>
</dbReference>
<dbReference type="Gene3D" id="1.20.58.110">
    <property type="entry name" value="Ribosomal protein S20"/>
    <property type="match status" value="1"/>
</dbReference>
<dbReference type="HAMAP" id="MF_00500">
    <property type="entry name" value="Ribosomal_bS20"/>
    <property type="match status" value="1"/>
</dbReference>
<dbReference type="InterPro" id="IPR002583">
    <property type="entry name" value="Ribosomal_bS20"/>
</dbReference>
<dbReference type="InterPro" id="IPR036510">
    <property type="entry name" value="Ribosomal_bS20_sf"/>
</dbReference>
<dbReference type="NCBIfam" id="TIGR00029">
    <property type="entry name" value="S20"/>
    <property type="match status" value="1"/>
</dbReference>
<dbReference type="PANTHER" id="PTHR33398">
    <property type="entry name" value="30S RIBOSOMAL PROTEIN S20"/>
    <property type="match status" value="1"/>
</dbReference>
<dbReference type="PANTHER" id="PTHR33398:SF1">
    <property type="entry name" value="SMALL RIBOSOMAL SUBUNIT PROTEIN BS20C"/>
    <property type="match status" value="1"/>
</dbReference>
<dbReference type="Pfam" id="PF01649">
    <property type="entry name" value="Ribosomal_S20p"/>
    <property type="match status" value="1"/>
</dbReference>
<dbReference type="SUPFAM" id="SSF46992">
    <property type="entry name" value="Ribosomal protein S20"/>
    <property type="match status" value="1"/>
</dbReference>
<protein>
    <recommendedName>
        <fullName evidence="1">Small ribosomal subunit protein bS20</fullName>
    </recommendedName>
    <alternativeName>
        <fullName evidence="2">30S ribosomal protein S20</fullName>
    </alternativeName>
</protein>